<feature type="chain" id="PRO_0000325727" description="Photosystem II reaction center protein M">
    <location>
        <begin position="1"/>
        <end position="31"/>
    </location>
</feature>
<feature type="transmembrane region" description="Helical" evidence="1">
    <location>
        <begin position="5"/>
        <end position="25"/>
    </location>
</feature>
<dbReference type="EMBL" id="EU189132">
    <property type="protein sequence ID" value="ABW83689.1"/>
    <property type="molecule type" value="Genomic_DNA"/>
</dbReference>
<dbReference type="RefSeq" id="YP_001542525.1">
    <property type="nucleotide sequence ID" value="NC_009963.1"/>
</dbReference>
<dbReference type="SMR" id="A8W3B8"/>
<dbReference type="GeneID" id="5729582"/>
<dbReference type="GO" id="GO:0009523">
    <property type="term" value="C:photosystem II"/>
    <property type="evidence" value="ECO:0007669"/>
    <property type="project" value="UniProtKB-KW"/>
</dbReference>
<dbReference type="GO" id="GO:0042170">
    <property type="term" value="C:plastid membrane"/>
    <property type="evidence" value="ECO:0007669"/>
    <property type="project" value="UniProtKB-SubCell"/>
</dbReference>
<dbReference type="GO" id="GO:0042651">
    <property type="term" value="C:thylakoid membrane"/>
    <property type="evidence" value="ECO:0007669"/>
    <property type="project" value="UniProtKB-UniRule"/>
</dbReference>
<dbReference type="GO" id="GO:0019684">
    <property type="term" value="P:photosynthesis, light reaction"/>
    <property type="evidence" value="ECO:0007669"/>
    <property type="project" value="InterPro"/>
</dbReference>
<dbReference type="HAMAP" id="MF_00438">
    <property type="entry name" value="PSII_PsbM"/>
    <property type="match status" value="1"/>
</dbReference>
<dbReference type="InterPro" id="IPR007826">
    <property type="entry name" value="PSII_PsbM"/>
</dbReference>
<dbReference type="InterPro" id="IPR037269">
    <property type="entry name" value="PSII_PsbM_sf"/>
</dbReference>
<dbReference type="NCBIfam" id="TIGR03038">
    <property type="entry name" value="PS_II_psbM"/>
    <property type="match status" value="1"/>
</dbReference>
<dbReference type="PANTHER" id="PTHR35774">
    <property type="entry name" value="PHOTOSYSTEM II REACTION CENTER PROTEIN M"/>
    <property type="match status" value="1"/>
</dbReference>
<dbReference type="PANTHER" id="PTHR35774:SF1">
    <property type="entry name" value="PHOTOSYSTEM II REACTION CENTER PROTEIN M"/>
    <property type="match status" value="1"/>
</dbReference>
<dbReference type="Pfam" id="PF05151">
    <property type="entry name" value="PsbM"/>
    <property type="match status" value="1"/>
</dbReference>
<dbReference type="SUPFAM" id="SSF161033">
    <property type="entry name" value="Photosystem II reaction center protein M, PsbM"/>
    <property type="match status" value="1"/>
</dbReference>
<proteinExistence type="inferred from homology"/>
<protein>
    <recommendedName>
        <fullName evidence="1">Photosystem II reaction center protein M</fullName>
        <shortName evidence="1">PSII-M</shortName>
    </recommendedName>
</protein>
<organism>
    <name type="scientific">Cuscuta exaltata</name>
    <name type="common">Tall dodder</name>
    <dbReference type="NCBI Taxonomy" id="476139"/>
    <lineage>
        <taxon>Eukaryota</taxon>
        <taxon>Viridiplantae</taxon>
        <taxon>Streptophyta</taxon>
        <taxon>Embryophyta</taxon>
        <taxon>Tracheophyta</taxon>
        <taxon>Spermatophyta</taxon>
        <taxon>Magnoliopsida</taxon>
        <taxon>eudicotyledons</taxon>
        <taxon>Gunneridae</taxon>
        <taxon>Pentapetalae</taxon>
        <taxon>asterids</taxon>
        <taxon>lamiids</taxon>
        <taxon>Solanales</taxon>
        <taxon>Convolvulaceae</taxon>
        <taxon>Cuscuteae</taxon>
        <taxon>Cuscuta</taxon>
        <taxon>Cuscuta subgen. Monogynella</taxon>
    </lineage>
</organism>
<keyword id="KW-0472">Membrane</keyword>
<keyword id="KW-0602">Photosynthesis</keyword>
<keyword id="KW-0604">Photosystem II</keyword>
<keyword id="KW-0934">Plastid</keyword>
<keyword id="KW-0674">Reaction center</keyword>
<keyword id="KW-0812">Transmembrane</keyword>
<keyword id="KW-1133">Transmembrane helix</keyword>
<comment type="function">
    <text evidence="1">One of the components of the core complex of photosystem II (PSII). PSII is a light-driven water:plastoquinone oxidoreductase that uses light energy to abstract electrons from H(2)O, generating O(2) and a proton gradient subsequently used for ATP formation. It consists of a core antenna complex that captures photons, and an electron transfer chain that converts photonic excitation into a charge separation. This subunit is found at the monomer-monomer interface.</text>
</comment>
<comment type="subunit">
    <text evidence="1">PSII is composed of 1 copy each of membrane proteins PsbA, PsbB, PsbC, PsbD, PsbE, PsbF, PsbH, PsbI, PsbJ, PsbK, PsbL, PsbM, PsbT, PsbX, PsbY, PsbZ, Psb30/Ycf12, at least 3 peripheral proteins of the oxygen-evolving complex and a large number of cofactors. It forms dimeric complexes.</text>
</comment>
<comment type="subcellular location">
    <subcellularLocation>
        <location evidence="2">Plastid membrane</location>
        <topology evidence="1">Single-pass membrane protein</topology>
    </subcellularLocation>
</comment>
<comment type="similarity">
    <text evidence="1">Belongs to the PsbM family.</text>
</comment>
<comment type="caution">
    <text evidence="2">Young tissue from this organism is photosynthetic and contains some thylakoids, although the photosynthetic activity does not exceed the light compensation point.</text>
</comment>
<reference key="1">
    <citation type="journal article" date="2007" name="BMC Plant Biol.">
        <title>Complete plastid genome sequences suggest strong selection for retention of photosynthetic genes in the parasitic plant genus Cuscuta.</title>
        <authorList>
            <person name="McNeal J.R."/>
            <person name="Kuehl J.V."/>
            <person name="Boore J.L."/>
            <person name="dePamphilis C.W."/>
        </authorList>
    </citation>
    <scope>NUCLEOTIDE SEQUENCE [LARGE SCALE GENOMIC DNA]</scope>
</reference>
<accession>A8W3B8</accession>
<name>PSBM_CUSEX</name>
<gene>
    <name evidence="1" type="primary">psbM</name>
</gene>
<geneLocation type="plastid"/>
<sequence length="31" mass="3404">MEVNILAFIATALLILVPTAFLLIIYVKTAK</sequence>
<evidence type="ECO:0000255" key="1">
    <source>
        <dbReference type="HAMAP-Rule" id="MF_00438"/>
    </source>
</evidence>
<evidence type="ECO:0000305" key="2"/>